<reference key="1">
    <citation type="journal article" date="2004" name="Proc. Natl. Acad. Sci. U.S.A.">
        <title>Insights into the evolution of Yersinia pestis through whole-genome comparison with Yersinia pseudotuberculosis.</title>
        <authorList>
            <person name="Chain P.S.G."/>
            <person name="Carniel E."/>
            <person name="Larimer F.W."/>
            <person name="Lamerdin J."/>
            <person name="Stoutland P.O."/>
            <person name="Regala W.M."/>
            <person name="Georgescu A.M."/>
            <person name="Vergez L.M."/>
            <person name="Land M.L."/>
            <person name="Motin V.L."/>
            <person name="Brubaker R.R."/>
            <person name="Fowler J."/>
            <person name="Hinnebusch J."/>
            <person name="Marceau M."/>
            <person name="Medigue C."/>
            <person name="Simonet M."/>
            <person name="Chenal-Francisque V."/>
            <person name="Souza B."/>
            <person name="Dacheux D."/>
            <person name="Elliott J.M."/>
            <person name="Derbise A."/>
            <person name="Hauser L.J."/>
            <person name="Garcia E."/>
        </authorList>
    </citation>
    <scope>NUCLEOTIDE SEQUENCE [LARGE SCALE GENOMIC DNA]</scope>
    <source>
        <strain>IP32953</strain>
    </source>
</reference>
<proteinExistence type="inferred from homology"/>
<feature type="chain" id="PRO_0000274473" description="Thiamine import ATP-binding protein ThiQ">
    <location>
        <begin position="1"/>
        <end position="236"/>
    </location>
</feature>
<feature type="domain" description="ABC transporter" evidence="1">
    <location>
        <begin position="2"/>
        <end position="230"/>
    </location>
</feature>
<feature type="binding site" evidence="1">
    <location>
        <begin position="32"/>
        <end position="39"/>
    </location>
    <ligand>
        <name>ATP</name>
        <dbReference type="ChEBI" id="CHEBI:30616"/>
    </ligand>
</feature>
<sequence>MLKLEKITYLYDHLPMCFDLHIQPGERVAILGPSGAGKSTLLSLIAGFLAPTSGHMLLNNQDHTASPPAQRPVSMLFQENNLFAHLTVEQNIGLGLHPGLKLSGEQRLLLQHIAQQVGLESCLDRLPAQLSGGQRQRAALARCLVRSQPILLLDEPFSALDPALRNEMLQLVDQVCINRQLTLLMVSHNLDDAARIAQRTLLIVEGRIDYDGPTQALVDGSAAKASVLGIKSAVIS</sequence>
<name>THIQ_YERPS</name>
<comment type="function">
    <text evidence="1">Part of the ABC transporter complex ThiBPQ involved in thiamine import. Responsible for energy coupling to the transport system.</text>
</comment>
<comment type="catalytic activity">
    <reaction evidence="1">
        <text>thiamine(out) + ATP + H2O = thiamine(in) + ADP + phosphate + H(+)</text>
        <dbReference type="Rhea" id="RHEA:29811"/>
        <dbReference type="ChEBI" id="CHEBI:15377"/>
        <dbReference type="ChEBI" id="CHEBI:15378"/>
        <dbReference type="ChEBI" id="CHEBI:18385"/>
        <dbReference type="ChEBI" id="CHEBI:30616"/>
        <dbReference type="ChEBI" id="CHEBI:43474"/>
        <dbReference type="ChEBI" id="CHEBI:456216"/>
        <dbReference type="EC" id="7.6.2.15"/>
    </reaction>
</comment>
<comment type="subunit">
    <text evidence="1">The complex is composed of two ATP-binding proteins (ThiQ), two transmembrane proteins (ThiP) and a solute-binding protein (ThiB).</text>
</comment>
<comment type="subcellular location">
    <subcellularLocation>
        <location evidence="1">Cell inner membrane</location>
        <topology evidence="1">Peripheral membrane protein</topology>
    </subcellularLocation>
</comment>
<comment type="similarity">
    <text evidence="1">Belongs to the ABC transporter superfamily. Thiamine importer (TC 3.A.1.19.1) family.</text>
</comment>
<comment type="sequence caution" evidence="2">
    <conflict type="erroneous initiation">
        <sequence resource="EMBL-CDS" id="CAH19901"/>
    </conflict>
</comment>
<dbReference type="EC" id="7.6.2.15" evidence="1"/>
<dbReference type="EMBL" id="BX936398">
    <property type="protein sequence ID" value="CAH19901.1"/>
    <property type="status" value="ALT_INIT"/>
    <property type="molecule type" value="Genomic_DNA"/>
</dbReference>
<dbReference type="RefSeq" id="WP_011191721.1">
    <property type="nucleotide sequence ID" value="NC_006155.1"/>
</dbReference>
<dbReference type="SMR" id="Q66EN1"/>
<dbReference type="KEGG" id="ypo:BZ17_1896"/>
<dbReference type="KEGG" id="yps:YPTB0661"/>
<dbReference type="PATRIC" id="fig|273123.14.peg.2015"/>
<dbReference type="Proteomes" id="UP000001011">
    <property type="component" value="Chromosome"/>
</dbReference>
<dbReference type="GO" id="GO:0005886">
    <property type="term" value="C:plasma membrane"/>
    <property type="evidence" value="ECO:0007669"/>
    <property type="project" value="UniProtKB-SubCell"/>
</dbReference>
<dbReference type="GO" id="GO:0048502">
    <property type="term" value="F:ABC-type thiamine transporter activity"/>
    <property type="evidence" value="ECO:0007669"/>
    <property type="project" value="UniProtKB-EC"/>
</dbReference>
<dbReference type="GO" id="GO:0005524">
    <property type="term" value="F:ATP binding"/>
    <property type="evidence" value="ECO:0007669"/>
    <property type="project" value="UniProtKB-KW"/>
</dbReference>
<dbReference type="GO" id="GO:0016887">
    <property type="term" value="F:ATP hydrolysis activity"/>
    <property type="evidence" value="ECO:0007669"/>
    <property type="project" value="InterPro"/>
</dbReference>
<dbReference type="FunFam" id="3.40.50.300:FF:001071">
    <property type="entry name" value="Thiamine import ATP-binding protein ThiQ"/>
    <property type="match status" value="1"/>
</dbReference>
<dbReference type="Gene3D" id="3.40.50.300">
    <property type="entry name" value="P-loop containing nucleotide triphosphate hydrolases"/>
    <property type="match status" value="1"/>
</dbReference>
<dbReference type="InterPro" id="IPR003593">
    <property type="entry name" value="AAA+_ATPase"/>
</dbReference>
<dbReference type="InterPro" id="IPR050093">
    <property type="entry name" value="ABC_SmlMolc_Importer"/>
</dbReference>
<dbReference type="InterPro" id="IPR003439">
    <property type="entry name" value="ABC_transporter-like_ATP-bd"/>
</dbReference>
<dbReference type="InterPro" id="IPR017871">
    <property type="entry name" value="ABC_transporter-like_CS"/>
</dbReference>
<dbReference type="InterPro" id="IPR027417">
    <property type="entry name" value="P-loop_NTPase"/>
</dbReference>
<dbReference type="InterPro" id="IPR005968">
    <property type="entry name" value="Thiamine_ABC_ThiQ"/>
</dbReference>
<dbReference type="NCBIfam" id="NF008039">
    <property type="entry name" value="PRK10771.1"/>
    <property type="match status" value="1"/>
</dbReference>
<dbReference type="NCBIfam" id="TIGR01277">
    <property type="entry name" value="thiQ"/>
    <property type="match status" value="1"/>
</dbReference>
<dbReference type="PANTHER" id="PTHR42781">
    <property type="entry name" value="SPERMIDINE/PUTRESCINE IMPORT ATP-BINDING PROTEIN POTA"/>
    <property type="match status" value="1"/>
</dbReference>
<dbReference type="PANTHER" id="PTHR42781:SF1">
    <property type="entry name" value="THIAMINE IMPORT ATP-BINDING PROTEIN THIQ"/>
    <property type="match status" value="1"/>
</dbReference>
<dbReference type="Pfam" id="PF00005">
    <property type="entry name" value="ABC_tran"/>
    <property type="match status" value="1"/>
</dbReference>
<dbReference type="SMART" id="SM00382">
    <property type="entry name" value="AAA"/>
    <property type="match status" value="1"/>
</dbReference>
<dbReference type="SUPFAM" id="SSF52540">
    <property type="entry name" value="P-loop containing nucleoside triphosphate hydrolases"/>
    <property type="match status" value="1"/>
</dbReference>
<dbReference type="PROSITE" id="PS00211">
    <property type="entry name" value="ABC_TRANSPORTER_1"/>
    <property type="match status" value="1"/>
</dbReference>
<dbReference type="PROSITE" id="PS50893">
    <property type="entry name" value="ABC_TRANSPORTER_2"/>
    <property type="match status" value="1"/>
</dbReference>
<dbReference type="PROSITE" id="PS51288">
    <property type="entry name" value="THIQ"/>
    <property type="match status" value="1"/>
</dbReference>
<gene>
    <name evidence="1" type="primary">thiQ</name>
    <name type="ordered locus">YPTB0661</name>
</gene>
<protein>
    <recommendedName>
        <fullName evidence="1">Thiamine import ATP-binding protein ThiQ</fullName>
        <ecNumber evidence="1">7.6.2.15</ecNumber>
    </recommendedName>
</protein>
<accession>Q66EN1</accession>
<keyword id="KW-0067">ATP-binding</keyword>
<keyword id="KW-0997">Cell inner membrane</keyword>
<keyword id="KW-1003">Cell membrane</keyword>
<keyword id="KW-0472">Membrane</keyword>
<keyword id="KW-0547">Nucleotide-binding</keyword>
<keyword id="KW-1278">Translocase</keyword>
<keyword id="KW-0813">Transport</keyword>
<evidence type="ECO:0000255" key="1">
    <source>
        <dbReference type="HAMAP-Rule" id="MF_01723"/>
    </source>
</evidence>
<evidence type="ECO:0000305" key="2"/>
<organism>
    <name type="scientific">Yersinia pseudotuberculosis serotype I (strain IP32953)</name>
    <dbReference type="NCBI Taxonomy" id="273123"/>
    <lineage>
        <taxon>Bacteria</taxon>
        <taxon>Pseudomonadati</taxon>
        <taxon>Pseudomonadota</taxon>
        <taxon>Gammaproteobacteria</taxon>
        <taxon>Enterobacterales</taxon>
        <taxon>Yersiniaceae</taxon>
        <taxon>Yersinia</taxon>
    </lineage>
</organism>